<reference key="1">
    <citation type="journal article" date="1986" name="Nature">
        <title>Chloroplast gene organization deduced from complete sequence of liverwort Marchantia polymorpha chloroplast DNA.</title>
        <authorList>
            <person name="Ohyama K."/>
            <person name="Fukuzawa H."/>
            <person name="Kohchi T."/>
            <person name="Shirai H."/>
            <person name="Sano T."/>
            <person name="Sano S."/>
            <person name="Umesono K."/>
            <person name="Shiki Y."/>
            <person name="Takeuchi M."/>
            <person name="Chang Z."/>
            <person name="Aota S."/>
            <person name="Inokuchi H."/>
            <person name="Ozeki H."/>
        </authorList>
    </citation>
    <scope>NUCLEOTIDE SEQUENCE [LARGE SCALE GENOMIC DNA]</scope>
</reference>
<reference key="2">
    <citation type="journal article" date="1988" name="J. Mol. Biol.">
        <title>Structure and organization of Marchantia polymorpha chloroplast genome. II. Gene organization of the large single copy region from rps'12 to atpB.</title>
        <authorList>
            <person name="Umesono K."/>
            <person name="Inokuchi H."/>
            <person name="Shiki Y."/>
            <person name="Takeuchi M."/>
            <person name="Chang Z."/>
            <person name="Fukuzawa H."/>
            <person name="Kohchi T."/>
            <person name="Shirai H."/>
            <person name="Ohyama K."/>
            <person name="Ozeki H."/>
        </authorList>
    </citation>
    <scope>NUCLEOTIDE SEQUENCE [GENOMIC DNA]</scope>
</reference>
<comment type="function">
    <text evidence="1">Component of the cytochrome b6-f complex, which mediates electron transfer between photosystem II (PSII) and photosystem I (PSI), cyclic electron flow around PSI, and state transitions.</text>
</comment>
<comment type="subunit">
    <text evidence="1">The 4 large subunits of the cytochrome b6-f complex are cytochrome b6, subunit IV (17 kDa polypeptide, PetD), cytochrome f and the Rieske protein, while the 4 small subunits are PetG, PetL, PetM and PetN. The complex functions as a dimer (By similarity).</text>
</comment>
<comment type="subcellular location">
    <subcellularLocation>
        <location evidence="1">Plastid</location>
        <location evidence="1">Chloroplast thylakoid membrane</location>
        <topology evidence="1">Single-pass membrane protein</topology>
    </subcellularLocation>
</comment>
<comment type="similarity">
    <text evidence="3">Belongs to the PetN family.</text>
</comment>
<evidence type="ECO:0000250" key="1"/>
<evidence type="ECO:0000255" key="2"/>
<evidence type="ECO:0000305" key="3"/>
<feature type="chain" id="PRO_0000217114" description="Cytochrome b6-f complex subunit 8">
    <location>
        <begin position="1"/>
        <end position="29"/>
    </location>
</feature>
<feature type="transmembrane region" description="Helical" evidence="2">
    <location>
        <begin position="3"/>
        <end position="23"/>
    </location>
</feature>
<gene>
    <name type="primary">petN</name>
    <name type="synonym">ycf6</name>
</gene>
<dbReference type="EMBL" id="X04465">
    <property type="status" value="NOT_ANNOTATED_CDS"/>
    <property type="molecule type" value="Genomic_DNA"/>
</dbReference>
<dbReference type="PIR" id="S01572">
    <property type="entry name" value="S01572"/>
</dbReference>
<dbReference type="SMR" id="P12177"/>
<dbReference type="GO" id="GO:0009535">
    <property type="term" value="C:chloroplast thylakoid membrane"/>
    <property type="evidence" value="ECO:0007669"/>
    <property type="project" value="UniProtKB-SubCell"/>
</dbReference>
<dbReference type="GO" id="GO:0009512">
    <property type="term" value="C:cytochrome b6f complex"/>
    <property type="evidence" value="ECO:0007669"/>
    <property type="project" value="InterPro"/>
</dbReference>
<dbReference type="GO" id="GO:0045158">
    <property type="term" value="F:electron transporter, transferring electrons within cytochrome b6/f complex of photosystem II activity"/>
    <property type="evidence" value="ECO:0007669"/>
    <property type="project" value="InterPro"/>
</dbReference>
<dbReference type="GO" id="GO:0017004">
    <property type="term" value="P:cytochrome complex assembly"/>
    <property type="evidence" value="ECO:0007669"/>
    <property type="project" value="UniProtKB-UniRule"/>
</dbReference>
<dbReference type="GO" id="GO:0015979">
    <property type="term" value="P:photosynthesis"/>
    <property type="evidence" value="ECO:0007669"/>
    <property type="project" value="UniProtKB-KW"/>
</dbReference>
<dbReference type="HAMAP" id="MF_00395">
    <property type="entry name" value="Cytb6_f_PetN"/>
    <property type="match status" value="1"/>
</dbReference>
<dbReference type="InterPro" id="IPR036143">
    <property type="entry name" value="Cytochr_b6-f_cplx_su8_sf"/>
</dbReference>
<dbReference type="InterPro" id="IPR005497">
    <property type="entry name" value="Cytochrome_b6-f_cplx_su8"/>
</dbReference>
<dbReference type="Pfam" id="PF03742">
    <property type="entry name" value="PetN"/>
    <property type="match status" value="1"/>
</dbReference>
<dbReference type="SUPFAM" id="SSF103451">
    <property type="entry name" value="PetN subunit of the cytochrome b6f complex"/>
    <property type="match status" value="1"/>
</dbReference>
<keyword id="KW-0150">Chloroplast</keyword>
<keyword id="KW-0249">Electron transport</keyword>
<keyword id="KW-0472">Membrane</keyword>
<keyword id="KW-0602">Photosynthesis</keyword>
<keyword id="KW-0934">Plastid</keyword>
<keyword id="KW-0793">Thylakoid</keyword>
<keyword id="KW-0812">Transmembrane</keyword>
<keyword id="KW-1133">Transmembrane helix</keyword>
<keyword id="KW-0813">Transport</keyword>
<protein>
    <recommendedName>
        <fullName>Cytochrome b6-f complex subunit 8</fullName>
    </recommendedName>
    <alternativeName>
        <fullName>Cytochrome b6-f complex subunit PetN</fullName>
    </alternativeName>
    <alternativeName>
        <fullName>Cytochrome b6-f complex subunit VIII</fullName>
    </alternativeName>
</protein>
<proteinExistence type="inferred from homology"/>
<accession>P12177</accession>
<geneLocation type="chloroplast"/>
<name>PETN_MARPO</name>
<sequence length="29" mass="3225">MDIINIAWAALMVIFTFSLSLVVWGRSGL</sequence>
<organism>
    <name type="scientific">Marchantia polymorpha</name>
    <name type="common">Common liverwort</name>
    <name type="synonym">Marchantia aquatica</name>
    <dbReference type="NCBI Taxonomy" id="3197"/>
    <lineage>
        <taxon>Eukaryota</taxon>
        <taxon>Viridiplantae</taxon>
        <taxon>Streptophyta</taxon>
        <taxon>Embryophyta</taxon>
        <taxon>Marchantiophyta</taxon>
        <taxon>Marchantiopsida</taxon>
        <taxon>Marchantiidae</taxon>
        <taxon>Marchantiales</taxon>
        <taxon>Marchantiaceae</taxon>
        <taxon>Marchantia</taxon>
    </lineage>
</organism>